<gene>
    <name evidence="1" type="primary">surf4</name>
</gene>
<organism>
    <name type="scientific">Danio rerio</name>
    <name type="common">Zebrafish</name>
    <name type="synonym">Brachydanio rerio</name>
    <dbReference type="NCBI Taxonomy" id="7955"/>
    <lineage>
        <taxon>Eukaryota</taxon>
        <taxon>Metazoa</taxon>
        <taxon>Chordata</taxon>
        <taxon>Craniata</taxon>
        <taxon>Vertebrata</taxon>
        <taxon>Euteleostomi</taxon>
        <taxon>Actinopterygii</taxon>
        <taxon>Neopterygii</taxon>
        <taxon>Teleostei</taxon>
        <taxon>Ostariophysi</taxon>
        <taxon>Cypriniformes</taxon>
        <taxon>Danionidae</taxon>
        <taxon>Danioninae</taxon>
        <taxon>Danio</taxon>
    </lineage>
</organism>
<comment type="function">
    <text evidence="1">Endoplasmic reticulum cargo receptor that mediates the export of lipoproteins by recruiting cargos into COPII vesicles to facilitate their secretion.</text>
</comment>
<comment type="subcellular location">
    <subcellularLocation>
        <location evidence="1">Endoplasmic reticulum membrane</location>
        <topology evidence="2">Multi-pass membrane protein</topology>
    </subcellularLocation>
    <subcellularLocation>
        <location evidence="1">Endoplasmic reticulum-Golgi intermediate compartment membrane</location>
        <topology evidence="2">Multi-pass membrane protein</topology>
    </subcellularLocation>
    <subcellularLocation>
        <location evidence="1">Golgi apparatus membrane</location>
        <topology evidence="2">Multi-pass membrane protein</topology>
    </subcellularLocation>
    <text evidence="1">Active at endoplasmic reticulum exit sites (ERES) where it is incorporated together with its lipoprotein cargos into COPII-coated vesicles. From the Golgi it is recycled back to the endoplasmic reticulum.</text>
</comment>
<comment type="domain">
    <text evidence="1">The di-lysine motif confers endoplasmic reticulum localization for type I membrane proteins.</text>
</comment>
<comment type="similarity">
    <text evidence="3">Belongs to the SURF4 family.</text>
</comment>
<feature type="chain" id="PRO_0000350582" description="Surfeit locus protein 4">
    <location>
        <begin position="1"/>
        <end position="269"/>
    </location>
</feature>
<feature type="transmembrane region" description="Helical" evidence="2">
    <location>
        <begin position="64"/>
        <end position="84"/>
    </location>
</feature>
<feature type="transmembrane region" description="Helical" evidence="2">
    <location>
        <begin position="92"/>
        <end position="112"/>
    </location>
</feature>
<feature type="transmembrane region" description="Helical" evidence="2">
    <location>
        <begin position="179"/>
        <end position="199"/>
    </location>
</feature>
<feature type="transmembrane region" description="Helical" evidence="2">
    <location>
        <begin position="203"/>
        <end position="223"/>
    </location>
</feature>
<feature type="transmembrane region" description="Helical" evidence="2">
    <location>
        <begin position="242"/>
        <end position="262"/>
    </location>
</feature>
<feature type="short sequence motif" description="Di-lysine motif" evidence="1">
    <location>
        <begin position="266"/>
        <end position="269"/>
    </location>
</feature>
<keyword id="KW-0256">Endoplasmic reticulum</keyword>
<keyword id="KW-0333">Golgi apparatus</keyword>
<keyword id="KW-0472">Membrane</keyword>
<keyword id="KW-0653">Protein transport</keyword>
<keyword id="KW-1185">Reference proteome</keyword>
<keyword id="KW-0812">Transmembrane</keyword>
<keyword id="KW-1133">Transmembrane helix</keyword>
<keyword id="KW-0813">Transport</keyword>
<evidence type="ECO:0000250" key="1">
    <source>
        <dbReference type="UniProtKB" id="O15260"/>
    </source>
</evidence>
<evidence type="ECO:0000255" key="2"/>
<evidence type="ECO:0000305" key="3"/>
<dbReference type="EMBL" id="BC056295">
    <property type="protein sequence ID" value="AAH56295.1"/>
    <property type="molecule type" value="mRNA"/>
</dbReference>
<dbReference type="EMBL" id="BC066509">
    <property type="protein sequence ID" value="AAH66509.1"/>
    <property type="molecule type" value="mRNA"/>
</dbReference>
<dbReference type="RefSeq" id="NP_957421.1">
    <property type="nucleotide sequence ID" value="NM_201127.1"/>
</dbReference>
<dbReference type="FunCoup" id="Q7SZQ7">
    <property type="interactions" value="2030"/>
</dbReference>
<dbReference type="STRING" id="7955.ENSDARP00000132774"/>
<dbReference type="PaxDb" id="7955-ENSDARP00000088722"/>
<dbReference type="Ensembl" id="ENSDART00000172177">
    <property type="protein sequence ID" value="ENSDARP00000132774"/>
    <property type="gene ID" value="ENSDARG00000104647"/>
</dbReference>
<dbReference type="GeneID" id="394102"/>
<dbReference type="KEGG" id="dre:394102"/>
<dbReference type="AGR" id="ZFIN:ZDB-GENE-040426-1426"/>
<dbReference type="CTD" id="6836"/>
<dbReference type="ZFIN" id="ZDB-GENE-040426-1426">
    <property type="gene designation" value="surf4"/>
</dbReference>
<dbReference type="eggNOG" id="KOG3998">
    <property type="taxonomic scope" value="Eukaryota"/>
</dbReference>
<dbReference type="HOGENOM" id="CLU_056195_0_0_1"/>
<dbReference type="InParanoid" id="Q7SZQ7"/>
<dbReference type="OMA" id="SSPRQYM"/>
<dbReference type="OrthoDB" id="7859621at2759"/>
<dbReference type="PhylomeDB" id="Q7SZQ7"/>
<dbReference type="TreeFam" id="TF300001"/>
<dbReference type="Reactome" id="R-DRE-6798695">
    <property type="pathway name" value="Neutrophil degranulation"/>
</dbReference>
<dbReference type="Reactome" id="R-DRE-6811434">
    <property type="pathway name" value="COPI-dependent Golgi-to-ER retrograde traffic"/>
</dbReference>
<dbReference type="PRO" id="PR:Q7SZQ7"/>
<dbReference type="Proteomes" id="UP000000437">
    <property type="component" value="Chromosome 5"/>
</dbReference>
<dbReference type="Bgee" id="ENSDARG00000104647">
    <property type="expression patterns" value="Expressed in muscle tissue and 23 other cell types or tissues"/>
</dbReference>
<dbReference type="GO" id="GO:0005783">
    <property type="term" value="C:endoplasmic reticulum"/>
    <property type="evidence" value="ECO:0000318"/>
    <property type="project" value="GO_Central"/>
</dbReference>
<dbReference type="GO" id="GO:0005789">
    <property type="term" value="C:endoplasmic reticulum membrane"/>
    <property type="evidence" value="ECO:0007669"/>
    <property type="project" value="UniProtKB-SubCell"/>
</dbReference>
<dbReference type="GO" id="GO:0005793">
    <property type="term" value="C:endoplasmic reticulum-Golgi intermediate compartment"/>
    <property type="evidence" value="ECO:0000318"/>
    <property type="project" value="GO_Central"/>
</dbReference>
<dbReference type="GO" id="GO:0033116">
    <property type="term" value="C:endoplasmic reticulum-Golgi intermediate compartment membrane"/>
    <property type="evidence" value="ECO:0007669"/>
    <property type="project" value="UniProtKB-SubCell"/>
</dbReference>
<dbReference type="GO" id="GO:0000139">
    <property type="term" value="C:Golgi membrane"/>
    <property type="evidence" value="ECO:0007669"/>
    <property type="project" value="UniProtKB-SubCell"/>
</dbReference>
<dbReference type="GO" id="GO:0038024">
    <property type="term" value="F:cargo receptor activity"/>
    <property type="evidence" value="ECO:0000250"/>
    <property type="project" value="UniProtKB"/>
</dbReference>
<dbReference type="GO" id="GO:0006888">
    <property type="term" value="P:endoplasmic reticulum to Golgi vesicle-mediated transport"/>
    <property type="evidence" value="ECO:0000250"/>
    <property type="project" value="UniProtKB"/>
</dbReference>
<dbReference type="GO" id="GO:0007030">
    <property type="term" value="P:Golgi organization"/>
    <property type="evidence" value="ECO:0000318"/>
    <property type="project" value="GO_Central"/>
</dbReference>
<dbReference type="GO" id="GO:0055088">
    <property type="term" value="P:lipid homeostasis"/>
    <property type="evidence" value="ECO:0000250"/>
    <property type="project" value="UniProtKB"/>
</dbReference>
<dbReference type="GO" id="GO:0042953">
    <property type="term" value="P:lipoprotein transport"/>
    <property type="evidence" value="ECO:0000250"/>
    <property type="project" value="UniProtKB"/>
</dbReference>
<dbReference type="GO" id="GO:0032368">
    <property type="term" value="P:regulation of lipid transport"/>
    <property type="evidence" value="ECO:0000250"/>
    <property type="project" value="UniProtKB"/>
</dbReference>
<dbReference type="InterPro" id="IPR045214">
    <property type="entry name" value="Surf1/Surf4"/>
</dbReference>
<dbReference type="InterPro" id="IPR002995">
    <property type="entry name" value="Surf4"/>
</dbReference>
<dbReference type="PANTHER" id="PTHR23427">
    <property type="entry name" value="SURFEIT LOCUS PROTEIN"/>
    <property type="match status" value="1"/>
</dbReference>
<dbReference type="PANTHER" id="PTHR23427:SF1">
    <property type="entry name" value="SURFEIT LOCUS PROTEIN 4"/>
    <property type="match status" value="1"/>
</dbReference>
<dbReference type="Pfam" id="PF02077">
    <property type="entry name" value="SURF4"/>
    <property type="match status" value="1"/>
</dbReference>
<dbReference type="PROSITE" id="PS01339">
    <property type="entry name" value="SURF4"/>
    <property type="match status" value="1"/>
</dbReference>
<proteinExistence type="evidence at transcript level"/>
<protein>
    <recommendedName>
        <fullName evidence="3">Surfeit locus protein 4</fullName>
    </recommendedName>
</protein>
<reference key="1">
    <citation type="submission" date="2004-02" db="EMBL/GenBank/DDBJ databases">
        <authorList>
            <consortium name="NIH - Zebrafish Gene Collection (ZGC) project"/>
        </authorList>
    </citation>
    <scope>NUCLEOTIDE SEQUENCE [LARGE SCALE MRNA]</scope>
    <source>
        <tissue>Kidney</tissue>
    </source>
</reference>
<name>SURF4_DANRE</name>
<accession>Q7SZQ7</accession>
<sequence>MGQEDMMSAAEDLADQFLRVTKQYLPHMARLCLISTFLEDGIRMWFQWSEQRDYIEATWSCGYFLATCFVIINLIGQIGGCVLVLSRNLVQYACFGLFCIIALQTVAYSILWDLKFLMRNLALGGGLLLLLAESRSEGKSMFAGVPSMGESSPKQYMQLGGRVLLVLMFMTLLHFDSDFFSILQNMVGTALIILVAVGFKTKLAALTLVVWLLAINVYFNAFWTVPAYKPMHDFLKYDFFQTTSVIGGLLLVVALGPGGVSMDEKKKEW</sequence>